<proteinExistence type="inferred from homology"/>
<comment type="function">
    <text evidence="1">Regulates arginine biosynthesis genes.</text>
</comment>
<comment type="pathway">
    <text>Amino-acid biosynthesis; L-arginine biosynthesis [regulation].</text>
</comment>
<comment type="subcellular location">
    <subcellularLocation>
        <location evidence="1">Cytoplasm</location>
    </subcellularLocation>
</comment>
<comment type="similarity">
    <text evidence="1">Belongs to the ArgR family.</text>
</comment>
<organism>
    <name type="scientific">Clostridium botulinum (strain ATCC 19397 / Type A)</name>
    <dbReference type="NCBI Taxonomy" id="441770"/>
    <lineage>
        <taxon>Bacteria</taxon>
        <taxon>Bacillati</taxon>
        <taxon>Bacillota</taxon>
        <taxon>Clostridia</taxon>
        <taxon>Eubacteriales</taxon>
        <taxon>Clostridiaceae</taxon>
        <taxon>Clostridium</taxon>
    </lineage>
</organism>
<sequence length="150" mass="16454">MKVSRHAKILEIINSKDIDTQEELAEELKKMGMNVTQATVSRDIKELKLIKVLGNTGKYKYATINHTESYMSDKLINIFAQTVINVENIDKLIIIKAISGSAPAAAEAIDTLGFDGVAGTIAGDNTIFVMARTNEKAQEITMKLKKIITA</sequence>
<protein>
    <recommendedName>
        <fullName evidence="1">Arginine repressor</fullName>
    </recommendedName>
</protein>
<feature type="chain" id="PRO_1000023555" description="Arginine repressor">
    <location>
        <begin position="1"/>
        <end position="150"/>
    </location>
</feature>
<name>ARGR_CLOB1</name>
<keyword id="KW-0028">Amino-acid biosynthesis</keyword>
<keyword id="KW-0055">Arginine biosynthesis</keyword>
<keyword id="KW-0963">Cytoplasm</keyword>
<keyword id="KW-0238">DNA-binding</keyword>
<keyword id="KW-0678">Repressor</keyword>
<keyword id="KW-0804">Transcription</keyword>
<keyword id="KW-0805">Transcription regulation</keyword>
<reference key="1">
    <citation type="journal article" date="2007" name="PLoS ONE">
        <title>Analysis of the neurotoxin complex genes in Clostridium botulinum A1-A4 and B1 strains: BoNT/A3, /Ba4 and /B1 clusters are located within plasmids.</title>
        <authorList>
            <person name="Smith T.J."/>
            <person name="Hill K.K."/>
            <person name="Foley B.T."/>
            <person name="Detter J.C."/>
            <person name="Munk A.C."/>
            <person name="Bruce D.C."/>
            <person name="Doggett N.A."/>
            <person name="Smith L.A."/>
            <person name="Marks J.D."/>
            <person name="Xie G."/>
            <person name="Brettin T.S."/>
        </authorList>
    </citation>
    <scope>NUCLEOTIDE SEQUENCE [LARGE SCALE GENOMIC DNA]</scope>
    <source>
        <strain>ATCC 19397 / Type A</strain>
    </source>
</reference>
<gene>
    <name evidence="1" type="primary">argR</name>
    <name type="ordered locus">CLB_1815</name>
</gene>
<accession>A7FUT4</accession>
<dbReference type="EMBL" id="CP000726">
    <property type="protein sequence ID" value="ABS33261.1"/>
    <property type="molecule type" value="Genomic_DNA"/>
</dbReference>
<dbReference type="RefSeq" id="WP_011986439.1">
    <property type="nucleotide sequence ID" value="NC_009697.1"/>
</dbReference>
<dbReference type="SMR" id="A7FUT4"/>
<dbReference type="KEGG" id="cba:CLB_1815"/>
<dbReference type="HOGENOM" id="CLU_097103_3_0_9"/>
<dbReference type="UniPathway" id="UPA00068"/>
<dbReference type="GO" id="GO:0005737">
    <property type="term" value="C:cytoplasm"/>
    <property type="evidence" value="ECO:0007669"/>
    <property type="project" value="UniProtKB-SubCell"/>
</dbReference>
<dbReference type="GO" id="GO:0034618">
    <property type="term" value="F:arginine binding"/>
    <property type="evidence" value="ECO:0007669"/>
    <property type="project" value="InterPro"/>
</dbReference>
<dbReference type="GO" id="GO:0003677">
    <property type="term" value="F:DNA binding"/>
    <property type="evidence" value="ECO:0007669"/>
    <property type="project" value="UniProtKB-KW"/>
</dbReference>
<dbReference type="GO" id="GO:0003700">
    <property type="term" value="F:DNA-binding transcription factor activity"/>
    <property type="evidence" value="ECO:0007669"/>
    <property type="project" value="UniProtKB-UniRule"/>
</dbReference>
<dbReference type="GO" id="GO:0006526">
    <property type="term" value="P:L-arginine biosynthetic process"/>
    <property type="evidence" value="ECO:0007669"/>
    <property type="project" value="UniProtKB-UniPathway"/>
</dbReference>
<dbReference type="GO" id="GO:0051259">
    <property type="term" value="P:protein complex oligomerization"/>
    <property type="evidence" value="ECO:0007669"/>
    <property type="project" value="InterPro"/>
</dbReference>
<dbReference type="GO" id="GO:1900079">
    <property type="term" value="P:regulation of arginine biosynthetic process"/>
    <property type="evidence" value="ECO:0007669"/>
    <property type="project" value="UniProtKB-UniRule"/>
</dbReference>
<dbReference type="Gene3D" id="3.30.1360.40">
    <property type="match status" value="1"/>
</dbReference>
<dbReference type="Gene3D" id="1.10.10.10">
    <property type="entry name" value="Winged helix-like DNA-binding domain superfamily/Winged helix DNA-binding domain"/>
    <property type="match status" value="1"/>
</dbReference>
<dbReference type="HAMAP" id="MF_00173">
    <property type="entry name" value="Arg_repressor"/>
    <property type="match status" value="1"/>
</dbReference>
<dbReference type="InterPro" id="IPR001669">
    <property type="entry name" value="Arg_repress"/>
</dbReference>
<dbReference type="InterPro" id="IPR020899">
    <property type="entry name" value="Arg_repress_C"/>
</dbReference>
<dbReference type="InterPro" id="IPR036251">
    <property type="entry name" value="Arg_repress_C_sf"/>
</dbReference>
<dbReference type="InterPro" id="IPR020900">
    <property type="entry name" value="Arg_repress_DNA-bd"/>
</dbReference>
<dbReference type="InterPro" id="IPR036388">
    <property type="entry name" value="WH-like_DNA-bd_sf"/>
</dbReference>
<dbReference type="InterPro" id="IPR036390">
    <property type="entry name" value="WH_DNA-bd_sf"/>
</dbReference>
<dbReference type="NCBIfam" id="TIGR01529">
    <property type="entry name" value="argR_whole"/>
    <property type="match status" value="1"/>
</dbReference>
<dbReference type="NCBIfam" id="NF001680">
    <property type="entry name" value="PRK00441.1"/>
    <property type="match status" value="1"/>
</dbReference>
<dbReference type="PANTHER" id="PTHR34471">
    <property type="entry name" value="ARGININE REPRESSOR"/>
    <property type="match status" value="1"/>
</dbReference>
<dbReference type="PANTHER" id="PTHR34471:SF1">
    <property type="entry name" value="ARGININE REPRESSOR"/>
    <property type="match status" value="1"/>
</dbReference>
<dbReference type="Pfam" id="PF01316">
    <property type="entry name" value="Arg_repressor"/>
    <property type="match status" value="1"/>
</dbReference>
<dbReference type="Pfam" id="PF02863">
    <property type="entry name" value="Arg_repressor_C"/>
    <property type="match status" value="1"/>
</dbReference>
<dbReference type="PRINTS" id="PR01467">
    <property type="entry name" value="ARGREPRESSOR"/>
</dbReference>
<dbReference type="SUPFAM" id="SSF55252">
    <property type="entry name" value="C-terminal domain of arginine repressor"/>
    <property type="match status" value="1"/>
</dbReference>
<dbReference type="SUPFAM" id="SSF46785">
    <property type="entry name" value="Winged helix' DNA-binding domain"/>
    <property type="match status" value="1"/>
</dbReference>
<evidence type="ECO:0000255" key="1">
    <source>
        <dbReference type="HAMAP-Rule" id="MF_00173"/>
    </source>
</evidence>